<keyword id="KW-0010">Activator</keyword>
<keyword id="KW-0067">ATP-binding</keyword>
<keyword id="KW-0131">Cell cycle</keyword>
<keyword id="KW-0961">Cell wall biogenesis/degradation</keyword>
<keyword id="KW-0175">Coiled coil</keyword>
<keyword id="KW-0963">Cytoplasm</keyword>
<keyword id="KW-0206">Cytoskeleton</keyword>
<keyword id="KW-0238">DNA-binding</keyword>
<keyword id="KW-0341">Growth regulation</keyword>
<keyword id="KW-0493">Microtubule</keyword>
<keyword id="KW-0505">Motor protein</keyword>
<keyword id="KW-0547">Nucleotide-binding</keyword>
<keyword id="KW-0539">Nucleus</keyword>
<keyword id="KW-1185">Reference proteome</keyword>
<keyword id="KW-0804">Transcription</keyword>
<keyword id="KW-0805">Transcription regulation</keyword>
<name>KN4A_ORYSJ</name>
<comment type="function">
    <text evidence="4 5">Microtubule-dependent motor protein involved in the control of the oriented deposition of cellulose microfibrils (PubMed:20444225, PubMed:21325138). Involved in wall biogenesis and modification, and contributes to cell-cycle progression and cell division (PubMed:20444225). Acts as a transcriptional activator in gibberellic acid (GA) biosynthesis pathway. Binds specifically to the DNA sequence 5'-ACCAACTTGAA-3' of the ent-kaurene oxidase 2 (CYP701A6 or OsKO2) promoter. May regulate CYP701A6 gene expression and mediates cell elongation by regulating the GA biosynthesis pathway (PubMed:21325138).</text>
</comment>
<comment type="activity regulation">
    <text evidence="10">May be regulated by cyclin-dependent kinase A.</text>
</comment>
<comment type="subunit">
    <text evidence="4">Homodimer.</text>
</comment>
<comment type="subcellular location">
    <subcellularLocation>
        <location evidence="4 5">Nucleus</location>
    </subcellularLocation>
    <subcellularLocation>
        <location evidence="10 11">Cytoplasm</location>
        <location evidence="10 11">Cytoskeleton</location>
    </subcellularLocation>
    <text evidence="4">Associated with mitotic microtubule arrays during cell division.</text>
</comment>
<comment type="tissue specificity">
    <text evidence="4">Expressed in young tissues with cell divisions, including initiating adventitious roots, primary root tips, flower primordia, intercalary meristems, sub-epidermal regions of young culms and panicles.</text>
</comment>
<comment type="domain">
    <text evidence="10">Composed of an N-terminal domain which is responsible for the motor activity of kinesin (it hydrolyzes ATP and binds microtubule) and a central to C-terminal alpha-helical coiled coil domain that mediates the heavy chain dimerization.</text>
</comment>
<comment type="disruption phenotype">
    <text evidence="4 5">Dwarf plants due to significant reduction in cell number (PubMed:20444225). Dwarf plants due to significant reduction in cell elongation (PubMed:21325138). This phenotype can be rescued by exogenous gibberellic acid (GA3) treatment (PubMed:21325138). Reduced mechanical strength (brittleness) due to an alteration in cellulose microfibril orientation and wall composition (PubMed:20444225).</text>
</comment>
<comment type="similarity">
    <text evidence="6">Belongs to the TRAFAC class myosin-kinesin ATPase superfamily. Kinesin family. KIN-4 subfamily.</text>
</comment>
<comment type="sequence caution" evidence="9">
    <conflict type="frameshift">
        <sequence resource="EMBL" id="AK100974"/>
    </conflict>
</comment>
<comment type="sequence caution" evidence="9">
    <conflict type="erroneous gene model prediction">
        <sequence resource="EMBL-CDS" id="BAD16508"/>
    </conflict>
</comment>
<dbReference type="EMBL" id="AP005860">
    <property type="protein sequence ID" value="BAD16507.1"/>
    <property type="molecule type" value="Genomic_DNA"/>
</dbReference>
<dbReference type="EMBL" id="AP005860">
    <property type="protein sequence ID" value="BAD16508.1"/>
    <property type="status" value="ALT_SEQ"/>
    <property type="molecule type" value="Genomic_DNA"/>
</dbReference>
<dbReference type="EMBL" id="AP008215">
    <property type="protein sequence ID" value="BAF24494.1"/>
    <property type="molecule type" value="Genomic_DNA"/>
</dbReference>
<dbReference type="EMBL" id="AP014965">
    <property type="protein sequence ID" value="BAT06843.1"/>
    <property type="molecule type" value="Genomic_DNA"/>
</dbReference>
<dbReference type="EMBL" id="CM000146">
    <property type="protein sequence ID" value="EEE69196.1"/>
    <property type="molecule type" value="Genomic_DNA"/>
</dbReference>
<dbReference type="EMBL" id="AK100974">
    <property type="status" value="NOT_ANNOTATED_CDS"/>
    <property type="molecule type" value="mRNA"/>
</dbReference>
<dbReference type="RefSeq" id="NP_001390636.1">
    <property type="nucleotide sequence ID" value="NM_001403707.1"/>
</dbReference>
<dbReference type="RefSeq" id="XP_015612252.1">
    <property type="nucleotide sequence ID" value="XM_015756766.1"/>
</dbReference>
<dbReference type="RefSeq" id="XP_015612253.1">
    <property type="nucleotide sequence ID" value="XM_015756767.1"/>
</dbReference>
<dbReference type="RefSeq" id="XP_015612254.1">
    <property type="nucleotide sequence ID" value="XM_015756768.1"/>
</dbReference>
<dbReference type="SMR" id="Q6YUL8"/>
<dbReference type="FunCoup" id="Q6YUL8">
    <property type="interactions" value="894"/>
</dbReference>
<dbReference type="STRING" id="39947.Q6YUL8"/>
<dbReference type="PaxDb" id="39947-Q6YUL8"/>
<dbReference type="EnsemblPlants" id="Os09t0114500-01">
    <property type="protein sequence ID" value="Os09t0114500-01"/>
    <property type="gene ID" value="Os09g0114500"/>
</dbReference>
<dbReference type="GeneID" id="4346402"/>
<dbReference type="Gramene" id="Os09t0114500-01">
    <property type="protein sequence ID" value="Os09t0114500-01"/>
    <property type="gene ID" value="Os09g0114500"/>
</dbReference>
<dbReference type="KEGG" id="dosa:Os09g0114500"/>
<dbReference type="eggNOG" id="KOG0244">
    <property type="taxonomic scope" value="Eukaryota"/>
</dbReference>
<dbReference type="HOGENOM" id="CLU_001485_4_2_1"/>
<dbReference type="InParanoid" id="Q6YUL8"/>
<dbReference type="OMA" id="YMLEIEQ"/>
<dbReference type="OrthoDB" id="3176171at2759"/>
<dbReference type="Proteomes" id="UP000000763">
    <property type="component" value="Chromosome 9"/>
</dbReference>
<dbReference type="Proteomes" id="UP000007752">
    <property type="component" value="Chromosome 9"/>
</dbReference>
<dbReference type="Proteomes" id="UP000059680">
    <property type="component" value="Chromosome 9"/>
</dbReference>
<dbReference type="ExpressionAtlas" id="Q6YUL8">
    <property type="expression patterns" value="baseline and differential"/>
</dbReference>
<dbReference type="GO" id="GO:0005737">
    <property type="term" value="C:cytoplasm"/>
    <property type="evidence" value="ECO:0007669"/>
    <property type="project" value="UniProtKB-KW"/>
</dbReference>
<dbReference type="GO" id="GO:0005856">
    <property type="term" value="C:cytoskeleton"/>
    <property type="evidence" value="ECO:0000314"/>
    <property type="project" value="UniProtKB"/>
</dbReference>
<dbReference type="GO" id="GO:0005874">
    <property type="term" value="C:microtubule"/>
    <property type="evidence" value="ECO:0007669"/>
    <property type="project" value="UniProtKB-KW"/>
</dbReference>
<dbReference type="GO" id="GO:0005875">
    <property type="term" value="C:microtubule associated complex"/>
    <property type="evidence" value="ECO:0000318"/>
    <property type="project" value="GO_Central"/>
</dbReference>
<dbReference type="GO" id="GO:0005634">
    <property type="term" value="C:nucleus"/>
    <property type="evidence" value="ECO:0000314"/>
    <property type="project" value="UniProtKB"/>
</dbReference>
<dbReference type="GO" id="GO:0005524">
    <property type="term" value="F:ATP binding"/>
    <property type="evidence" value="ECO:0007669"/>
    <property type="project" value="UniProtKB-KW"/>
</dbReference>
<dbReference type="GO" id="GO:0008017">
    <property type="term" value="F:microtubule binding"/>
    <property type="evidence" value="ECO:0007669"/>
    <property type="project" value="InterPro"/>
</dbReference>
<dbReference type="GO" id="GO:0003777">
    <property type="term" value="F:microtubule motor activity"/>
    <property type="evidence" value="ECO:0000318"/>
    <property type="project" value="GO_Central"/>
</dbReference>
<dbReference type="GO" id="GO:0043565">
    <property type="term" value="F:sequence-specific DNA binding"/>
    <property type="evidence" value="ECO:0000314"/>
    <property type="project" value="UniProtKB"/>
</dbReference>
<dbReference type="GO" id="GO:0010215">
    <property type="term" value="P:cellulose microfibril organization"/>
    <property type="evidence" value="ECO:0000315"/>
    <property type="project" value="UniProtKB"/>
</dbReference>
<dbReference type="GO" id="GO:0007018">
    <property type="term" value="P:microtubule-based movement"/>
    <property type="evidence" value="ECO:0007669"/>
    <property type="project" value="InterPro"/>
</dbReference>
<dbReference type="GO" id="GO:0007052">
    <property type="term" value="P:mitotic spindle organization"/>
    <property type="evidence" value="ECO:0000318"/>
    <property type="project" value="GO_Central"/>
</dbReference>
<dbReference type="GO" id="GO:0009832">
    <property type="term" value="P:plant-type cell wall biogenesis"/>
    <property type="evidence" value="ECO:0000315"/>
    <property type="project" value="UniProtKB"/>
</dbReference>
<dbReference type="GO" id="GO:0045893">
    <property type="term" value="P:positive regulation of DNA-templated transcription"/>
    <property type="evidence" value="ECO:0000314"/>
    <property type="project" value="UniProtKB"/>
</dbReference>
<dbReference type="GO" id="GO:0042127">
    <property type="term" value="P:regulation of cell population proliferation"/>
    <property type="evidence" value="ECO:0000315"/>
    <property type="project" value="UniProtKB"/>
</dbReference>
<dbReference type="GO" id="GO:0009937">
    <property type="term" value="P:regulation of gibberellic acid mediated signaling pathway"/>
    <property type="evidence" value="ECO:0000315"/>
    <property type="project" value="UniProtKB"/>
</dbReference>
<dbReference type="GO" id="GO:0051231">
    <property type="term" value="P:spindle elongation"/>
    <property type="evidence" value="ECO:0000318"/>
    <property type="project" value="GO_Central"/>
</dbReference>
<dbReference type="CDD" id="cd01372">
    <property type="entry name" value="KISc_KIF4"/>
    <property type="match status" value="1"/>
</dbReference>
<dbReference type="FunFam" id="3.40.850.10:FF:000032">
    <property type="entry name" value="kinesin-like protein KIN-4A isoform X1"/>
    <property type="match status" value="1"/>
</dbReference>
<dbReference type="Gene3D" id="3.40.850.10">
    <property type="entry name" value="Kinesin motor domain"/>
    <property type="match status" value="1"/>
</dbReference>
<dbReference type="InterPro" id="IPR027640">
    <property type="entry name" value="Kinesin-like_fam"/>
</dbReference>
<dbReference type="InterPro" id="IPR019821">
    <property type="entry name" value="Kinesin_motor_CS"/>
</dbReference>
<dbReference type="InterPro" id="IPR001752">
    <property type="entry name" value="Kinesin_motor_dom"/>
</dbReference>
<dbReference type="InterPro" id="IPR036961">
    <property type="entry name" value="Kinesin_motor_dom_sf"/>
</dbReference>
<dbReference type="InterPro" id="IPR027417">
    <property type="entry name" value="P-loop_NTPase"/>
</dbReference>
<dbReference type="PANTHER" id="PTHR47969">
    <property type="entry name" value="CHROMOSOME-ASSOCIATED KINESIN KIF4A-RELATED"/>
    <property type="match status" value="1"/>
</dbReference>
<dbReference type="PANTHER" id="PTHR47969:SF15">
    <property type="entry name" value="CHROMOSOME-ASSOCIATED KINESIN KIF4A-RELATED"/>
    <property type="match status" value="1"/>
</dbReference>
<dbReference type="Pfam" id="PF00225">
    <property type="entry name" value="Kinesin"/>
    <property type="match status" value="1"/>
</dbReference>
<dbReference type="PRINTS" id="PR00380">
    <property type="entry name" value="KINESINHEAVY"/>
</dbReference>
<dbReference type="SMART" id="SM00129">
    <property type="entry name" value="KISc"/>
    <property type="match status" value="1"/>
</dbReference>
<dbReference type="SUPFAM" id="SSF52540">
    <property type="entry name" value="P-loop containing nucleoside triphosphate hydrolases"/>
    <property type="match status" value="1"/>
</dbReference>
<dbReference type="PROSITE" id="PS00411">
    <property type="entry name" value="KINESIN_MOTOR_1"/>
    <property type="match status" value="1"/>
</dbReference>
<dbReference type="PROSITE" id="PS50067">
    <property type="entry name" value="KINESIN_MOTOR_2"/>
    <property type="match status" value="1"/>
</dbReference>
<organism evidence="16">
    <name type="scientific">Oryza sativa subsp. japonica</name>
    <name type="common">Rice</name>
    <dbReference type="NCBI Taxonomy" id="39947"/>
    <lineage>
        <taxon>Eukaryota</taxon>
        <taxon>Viridiplantae</taxon>
        <taxon>Streptophyta</taxon>
        <taxon>Embryophyta</taxon>
        <taxon>Tracheophyta</taxon>
        <taxon>Spermatophyta</taxon>
        <taxon>Magnoliopsida</taxon>
        <taxon>Liliopsida</taxon>
        <taxon>Poales</taxon>
        <taxon>Poaceae</taxon>
        <taxon>BOP clade</taxon>
        <taxon>Oryzoideae</taxon>
        <taxon>Oryzeae</taxon>
        <taxon>Oryzinae</taxon>
        <taxon>Oryza</taxon>
        <taxon>Oryza sativa</taxon>
    </lineage>
</organism>
<feature type="chain" id="PRO_0000431963" description="Kinesin-like protein KIN-4A">
    <location>
        <begin position="1"/>
        <end position="1035"/>
    </location>
</feature>
<feature type="domain" description="Kinesin motor" evidence="2">
    <location>
        <begin position="10"/>
        <end position="369"/>
    </location>
</feature>
<feature type="region of interest" description="Disordered" evidence="3">
    <location>
        <begin position="697"/>
        <end position="720"/>
    </location>
</feature>
<feature type="region of interest" description="Disordered" evidence="3">
    <location>
        <begin position="766"/>
        <end position="787"/>
    </location>
</feature>
<feature type="region of interest" description="Disordered" evidence="3">
    <location>
        <begin position="882"/>
        <end position="928"/>
    </location>
</feature>
<feature type="region of interest" description="Disordered" evidence="3">
    <location>
        <begin position="1014"/>
        <end position="1035"/>
    </location>
</feature>
<feature type="coiled-coil region" evidence="1">
    <location>
        <begin position="380"/>
        <end position="437"/>
    </location>
</feature>
<feature type="coiled-coil region" evidence="1">
    <location>
        <begin position="498"/>
        <end position="702"/>
    </location>
</feature>
<feature type="coiled-coil region" evidence="1">
    <location>
        <begin position="850"/>
        <end position="904"/>
    </location>
</feature>
<feature type="short sequence motif" description="Nuclear localization signal" evidence="4">
    <location>
        <begin position="971"/>
        <end position="987"/>
    </location>
</feature>
<feature type="compositionally biased region" description="Polar residues" evidence="3">
    <location>
        <begin position="704"/>
        <end position="716"/>
    </location>
</feature>
<feature type="compositionally biased region" description="Polar residues" evidence="3">
    <location>
        <begin position="778"/>
        <end position="787"/>
    </location>
</feature>
<feature type="compositionally biased region" description="Basic and acidic residues" evidence="3">
    <location>
        <begin position="882"/>
        <end position="898"/>
    </location>
</feature>
<feature type="compositionally biased region" description="Polar residues" evidence="3">
    <location>
        <begin position="902"/>
        <end position="926"/>
    </location>
</feature>
<feature type="binding site" evidence="2">
    <location>
        <begin position="89"/>
        <end position="96"/>
    </location>
    <ligand>
        <name>ATP</name>
        <dbReference type="ChEBI" id="CHEBI:30616"/>
    </ligand>
</feature>
<feature type="mutagenesis site" description="Loss of nuclear targeting." evidence="4">
    <original>K</original>
    <variation>A</variation>
    <location>
        <position position="971"/>
    </location>
</feature>
<feature type="mutagenesis site" description="Loss of nuclear targeting." evidence="4">
    <original>K</original>
    <variation>A</variation>
    <location>
        <position position="972"/>
    </location>
</feature>
<feature type="mutagenesis site" description="Reduces nuclear targeting." evidence="4">
    <original>K</original>
    <variation>A</variation>
    <location>
        <position position="986"/>
    </location>
</feature>
<feature type="mutagenesis site" description="Reduces nuclear targeting." evidence="4">
    <original>R</original>
    <variation>A</variation>
    <location>
        <position position="987"/>
    </location>
</feature>
<feature type="sequence conflict" description="In Ref. 5; AK100974." evidence="9" ref="5">
    <original>G</original>
    <variation>D</variation>
    <location>
        <position position="174"/>
    </location>
</feature>
<feature type="sequence conflict" description="In Ref. 5; AK100974." evidence="9" ref="5">
    <original>N</original>
    <variation>S</variation>
    <location>
        <position position="224"/>
    </location>
</feature>
<feature type="sequence conflict" description="In Ref. 5; AK100974." evidence="9" ref="5">
    <original>N</original>
    <variation>D</variation>
    <location>
        <position position="364"/>
    </location>
</feature>
<feature type="sequence conflict" description="In Ref. 4; EEE69196." evidence="9" ref="4">
    <location>
        <position position="480"/>
    </location>
</feature>
<accession>Q6YUL8</accession>
<accession>A0A0P0XKI2</accession>
<accession>B9G250</accession>
<accession>Q6YUL7</accession>
<gene>
    <name evidence="9" type="primary">KIN4A</name>
    <name evidence="7" type="synonym">BC2</name>
    <name evidence="8" type="synonym">GDD1</name>
    <name evidence="14" type="ordered locus">Os09g0114500</name>
    <name evidence="9" type="ordered locus">LOC_Os09g02650</name>
    <name evidence="12" type="ORF">OJ1134_E08.39-1</name>
    <name evidence="13" type="ORF">OJ1134_E08.39-2</name>
    <name evidence="15" type="ORF">OsJ_28385</name>
</gene>
<sequence length="1035" mass="116386">MTMEHGEDCCVKVAVHVRPLIGDEKLQGCKDCVSVVSGKPQVQIGSHSFTFDHVYGSSGTPSAAMFEECVAPLVDGLFQGYNATVLAYGQTGSGKTYTMGTACKEGSHIGIIPRAMATLFDKIDKLKNQVEFQLRVSFIEILKEEVRDLLDPATAAVGKLENGNGHATKLSVPGKPPVQIREASNGVITLAGSTEVHVTTQKEMTACLEQGSLSRATGSTNMNNQSSRSHAIFTITLEQMRKADPIMTLDGMPIEEMNEDYLCAKLHLVDLAGSERAKRTGSDGLRFKEGVHINRGLLALGNVISALGDEKKRKEGAHVPYRDSKLTRLLQDSLGGNSKTVMIACISPADINAEETLNTLKYANRARNIQNKPIVNRNPVADEMKRMRQQIEYLQAELVSARGGVVLDDVQGLRERISMLEQKNEDLCRELYDLRNHGYTDPCEPELQKIGTGYTKGEGLKRSLQSTEPFDVPMTDSVRAGSPKDIDDEVAKEWEHTMLQDSMGKELNELNRQLEQKESEMKMYGSDTVALKQHFGKKLLELEEEKRAVQQERDRLLAEVESLNADGQTHKLRDAQLQKLKTLEAQILDLKKKQENQVQLLKEKQKSDEAAKKLQEEIHSIKAQKVQLQHKIKQEAEQFRQWKATREKELLQLRKEGRRNEYERHKLQALNQRQKLVLQRKTEEAAMATKRLKELLEARKSSGRDNSGMNGTSPGSHMTEKSLQKWLEQDLEVMVHVHEVRNEYEKQSQLRAALGEELAILKQEDVMSGAASPPRGKNGNSRANTLSPNARQARIASLESMVTISSNTLVAMASQLSEAEERERAFSGRGRWNQLRSMAEAKSLLQYIFNVAADARCQVREKEMEIKEMKEQMTELVTILRHSESRRRETEKQLKQREQAAVTATTSPGNGNGSVKHSADDSNTPLSPVAVPAQKQLKYSAGIVNSPSKGVPAFNKQHLKMVPMAQLPVGKKVSIAGQSGKLWRWKRSHHQWLLQFKWKWQKPWKLSEMIRHSDETMTRTRPRPQLLPHRPQRVM</sequence>
<proteinExistence type="evidence at protein level"/>
<reference key="1">
    <citation type="journal article" date="2005" name="Nature">
        <title>The map-based sequence of the rice genome.</title>
        <authorList>
            <consortium name="International rice genome sequencing project (IRGSP)"/>
        </authorList>
    </citation>
    <scope>NUCLEOTIDE SEQUENCE [LARGE SCALE GENOMIC DNA]</scope>
    <source>
        <strain>cv. Nipponbare</strain>
    </source>
</reference>
<reference key="2">
    <citation type="journal article" date="2008" name="Nucleic Acids Res.">
        <title>The rice annotation project database (RAP-DB): 2008 update.</title>
        <authorList>
            <consortium name="The rice annotation project (RAP)"/>
        </authorList>
    </citation>
    <scope>GENOME REANNOTATION</scope>
    <source>
        <strain>cv. Nipponbare</strain>
    </source>
</reference>
<reference key="3">
    <citation type="journal article" date="2013" name="Rice">
        <title>Improvement of the Oryza sativa Nipponbare reference genome using next generation sequence and optical map data.</title>
        <authorList>
            <person name="Kawahara Y."/>
            <person name="de la Bastide M."/>
            <person name="Hamilton J.P."/>
            <person name="Kanamori H."/>
            <person name="McCombie W.R."/>
            <person name="Ouyang S."/>
            <person name="Schwartz D.C."/>
            <person name="Tanaka T."/>
            <person name="Wu J."/>
            <person name="Zhou S."/>
            <person name="Childs K.L."/>
            <person name="Davidson R.M."/>
            <person name="Lin H."/>
            <person name="Quesada-Ocampo L."/>
            <person name="Vaillancourt B."/>
            <person name="Sakai H."/>
            <person name="Lee S.S."/>
            <person name="Kim J."/>
            <person name="Numa H."/>
            <person name="Itoh T."/>
            <person name="Buell C.R."/>
            <person name="Matsumoto T."/>
        </authorList>
    </citation>
    <scope>GENOME REANNOTATION</scope>
    <source>
        <strain>cv. Nipponbare</strain>
    </source>
</reference>
<reference key="4">
    <citation type="journal article" date="2005" name="PLoS Biol.">
        <title>The genomes of Oryza sativa: a history of duplications.</title>
        <authorList>
            <person name="Yu J."/>
            <person name="Wang J."/>
            <person name="Lin W."/>
            <person name="Li S."/>
            <person name="Li H."/>
            <person name="Zhou J."/>
            <person name="Ni P."/>
            <person name="Dong W."/>
            <person name="Hu S."/>
            <person name="Zeng C."/>
            <person name="Zhang J."/>
            <person name="Zhang Y."/>
            <person name="Li R."/>
            <person name="Xu Z."/>
            <person name="Li S."/>
            <person name="Li X."/>
            <person name="Zheng H."/>
            <person name="Cong L."/>
            <person name="Lin L."/>
            <person name="Yin J."/>
            <person name="Geng J."/>
            <person name="Li G."/>
            <person name="Shi J."/>
            <person name="Liu J."/>
            <person name="Lv H."/>
            <person name="Li J."/>
            <person name="Wang J."/>
            <person name="Deng Y."/>
            <person name="Ran L."/>
            <person name="Shi X."/>
            <person name="Wang X."/>
            <person name="Wu Q."/>
            <person name="Li C."/>
            <person name="Ren X."/>
            <person name="Wang J."/>
            <person name="Wang X."/>
            <person name="Li D."/>
            <person name="Liu D."/>
            <person name="Zhang X."/>
            <person name="Ji Z."/>
            <person name="Zhao W."/>
            <person name="Sun Y."/>
            <person name="Zhang Z."/>
            <person name="Bao J."/>
            <person name="Han Y."/>
            <person name="Dong L."/>
            <person name="Ji J."/>
            <person name="Chen P."/>
            <person name="Wu S."/>
            <person name="Liu J."/>
            <person name="Xiao Y."/>
            <person name="Bu D."/>
            <person name="Tan J."/>
            <person name="Yang L."/>
            <person name="Ye C."/>
            <person name="Zhang J."/>
            <person name="Xu J."/>
            <person name="Zhou Y."/>
            <person name="Yu Y."/>
            <person name="Zhang B."/>
            <person name="Zhuang S."/>
            <person name="Wei H."/>
            <person name="Liu B."/>
            <person name="Lei M."/>
            <person name="Yu H."/>
            <person name="Li Y."/>
            <person name="Xu H."/>
            <person name="Wei S."/>
            <person name="He X."/>
            <person name="Fang L."/>
            <person name="Zhang Z."/>
            <person name="Zhang Y."/>
            <person name="Huang X."/>
            <person name="Su Z."/>
            <person name="Tong W."/>
            <person name="Li J."/>
            <person name="Tong Z."/>
            <person name="Li S."/>
            <person name="Ye J."/>
            <person name="Wang L."/>
            <person name="Fang L."/>
            <person name="Lei T."/>
            <person name="Chen C.-S."/>
            <person name="Chen H.-C."/>
            <person name="Xu Z."/>
            <person name="Li H."/>
            <person name="Huang H."/>
            <person name="Zhang F."/>
            <person name="Xu H."/>
            <person name="Li N."/>
            <person name="Zhao C."/>
            <person name="Li S."/>
            <person name="Dong L."/>
            <person name="Huang Y."/>
            <person name="Li L."/>
            <person name="Xi Y."/>
            <person name="Qi Q."/>
            <person name="Li W."/>
            <person name="Zhang B."/>
            <person name="Hu W."/>
            <person name="Zhang Y."/>
            <person name="Tian X."/>
            <person name="Jiao Y."/>
            <person name="Liang X."/>
            <person name="Jin J."/>
            <person name="Gao L."/>
            <person name="Zheng W."/>
            <person name="Hao B."/>
            <person name="Liu S.-M."/>
            <person name="Wang W."/>
            <person name="Yuan L."/>
            <person name="Cao M."/>
            <person name="McDermott J."/>
            <person name="Samudrala R."/>
            <person name="Wang J."/>
            <person name="Wong G.K.-S."/>
            <person name="Yang H."/>
        </authorList>
    </citation>
    <scope>NUCLEOTIDE SEQUENCE [LARGE SCALE GENOMIC DNA]</scope>
    <source>
        <strain>cv. Nipponbare</strain>
    </source>
</reference>
<reference key="5">
    <citation type="journal article" date="2003" name="Science">
        <title>Collection, mapping, and annotation of over 28,000 cDNA clones from japonica rice.</title>
        <authorList>
            <consortium name="The rice full-length cDNA consortium"/>
        </authorList>
    </citation>
    <scope>NUCLEOTIDE SEQUENCE [LARGE SCALE MRNA]</scope>
    <source>
        <strain>cv. Nipponbare</strain>
    </source>
</reference>
<reference key="6">
    <citation type="journal article" date="2009" name="Ann. Bot.">
        <title>Evaluating the microtubule cytoskeleton and its interacting proteins in monocots by mining the rice genome.</title>
        <authorList>
            <person name="Guo L."/>
            <person name="Ho C.M."/>
            <person name="Kong Z."/>
            <person name="Lee Y.R."/>
            <person name="Qian Q."/>
            <person name="Liu B."/>
        </authorList>
    </citation>
    <scope>GENE FAMILY</scope>
    <scope>NOMENCLATURE</scope>
</reference>
<reference key="7">
    <citation type="journal article" date="2010" name="Plant J.">
        <title>Brittle Culm 12, a dual-targeting kinesin-4 protein, controls cell-cycle progression and wall properties in rice.</title>
        <authorList>
            <person name="Zhang M."/>
            <person name="Zhang B."/>
            <person name="Qian Q."/>
            <person name="Yu Y."/>
            <person name="Li R."/>
            <person name="Zhang J."/>
            <person name="Liu X."/>
            <person name="Zeng D."/>
            <person name="Li J."/>
            <person name="Zhou Y."/>
        </authorList>
    </citation>
    <scope>FUNCTION</scope>
    <scope>ACTIVITY REGULATION</scope>
    <scope>SUBUNIT</scope>
    <scope>SUBCELLULAR LOCATION</scope>
    <scope>NUCLEAR LOCALIZATION SIGNAL</scope>
    <scope>TISSUE SPECIFICITY</scope>
    <scope>MUTAGENESIS OF LYS-971; LYS-972; LYS-986 AND ARG-987</scope>
    <scope>DISRUPTION PHENOTYPE</scope>
    <source>
        <strain>cv. Nipponbare</strain>
    </source>
</reference>
<reference key="8">
    <citation type="journal article" date="2011" name="Plant Cell">
        <title>Mutation of rice BC12/GDD1, which encodes a kinesin-like protein that binds to a GA biosynthesis gene promoter, leads to dwarfism with impaired cell elongation.</title>
        <authorList>
            <person name="Li J."/>
            <person name="Jiang J."/>
            <person name="Qian Q."/>
            <person name="Xu Y."/>
            <person name="Zhang C."/>
            <person name="Xiao J."/>
            <person name="Du C."/>
            <person name="Luo W."/>
            <person name="Zou G."/>
            <person name="Chen M."/>
            <person name="Huang Y."/>
            <person name="Feng Y."/>
            <person name="Cheng Z."/>
            <person name="Yuan M."/>
            <person name="Chong K."/>
        </authorList>
    </citation>
    <scope>FUNCTION</scope>
    <scope>SUBCELLULAR LOCATION</scope>
    <scope>DISRUPTION PHENOTYPE</scope>
    <source>
        <strain>cv. Zhonghua 10</strain>
    </source>
</reference>
<protein>
    <recommendedName>
        <fullName evidence="9">Kinesin-like protein KIN-4A</fullName>
    </recommendedName>
    <alternativeName>
        <fullName evidence="7">Protein BRITTLE CULM 2</fullName>
    </alternativeName>
    <alternativeName>
        <fullName evidence="8">Protein GIBBERELLIN-DEFICIENT DWARF 1</fullName>
    </alternativeName>
</protein>
<evidence type="ECO:0000255" key="1"/>
<evidence type="ECO:0000255" key="2">
    <source>
        <dbReference type="PROSITE-ProRule" id="PRU00283"/>
    </source>
</evidence>
<evidence type="ECO:0000256" key="3">
    <source>
        <dbReference type="SAM" id="MobiDB-lite"/>
    </source>
</evidence>
<evidence type="ECO:0000269" key="4">
    <source>
    </source>
</evidence>
<evidence type="ECO:0000269" key="5">
    <source>
    </source>
</evidence>
<evidence type="ECO:0000303" key="6">
    <source>
    </source>
</evidence>
<evidence type="ECO:0000303" key="7">
    <source>
    </source>
</evidence>
<evidence type="ECO:0000303" key="8">
    <source>
    </source>
</evidence>
<evidence type="ECO:0000305" key="9"/>
<evidence type="ECO:0000305" key="10">
    <source>
    </source>
</evidence>
<evidence type="ECO:0000305" key="11">
    <source>
    </source>
</evidence>
<evidence type="ECO:0000312" key="12">
    <source>
        <dbReference type="EMBL" id="BAD16507.1"/>
    </source>
</evidence>
<evidence type="ECO:0000312" key="13">
    <source>
        <dbReference type="EMBL" id="BAD16508.1"/>
    </source>
</evidence>
<evidence type="ECO:0000312" key="14">
    <source>
        <dbReference type="EMBL" id="BAF24494.1"/>
    </source>
</evidence>
<evidence type="ECO:0000312" key="15">
    <source>
        <dbReference type="EMBL" id="EEE69196.1"/>
    </source>
</evidence>
<evidence type="ECO:0000312" key="16">
    <source>
        <dbReference type="Proteomes" id="UP000059680"/>
    </source>
</evidence>